<sequence length="671" mass="73442">MEPIEQQLTELRTTLRHHEYLYHVMDAPEIPDAEYDRLMRELRELEAQRPDLITPDSPTQRVGAAPLTAFNQIRHEVPMLSLDNVFDEESFLAFNKRVQDRLKSTENVIWCCELKLDGLAVSILYENGVLVSAATRGDGTTGEDITSNVRTIRAIPLKLHGDNIPARLEVRGEVFLPQAGFEKINEDARRTGGKVFANPRNAAAGSLRQLDPRITAKRPLTFFCYGVGILEGGELPDTHLGRLLQFKAWGLPVSDRVTLCDSPQAVLDFYRNVEKDRPTLGFDIDGVVIKVNSLALQEQLGFVARAPRWAVAFKFPAQEQMTFVRDVEFQVGRTGAITPVARLEPVQVAGVLVSNATLHNADEIERLGLRIGDKVVIRRAGDVIPQVVNVVLSERPEETRPIVFPTHCPVCGSDVERVEGEAVTRCTGGLICGAQRKESLKHFVSRRAMDVDGMGDKIIDQLVEREYVHTPADLFRLTAGKLTGLDRMGPKSAQNVVNALEKAKATTFARFLYALGIREVGEATAAGLAAYFGTLEALQTATIDELQKVPDVGIVVATHVFNFFAEESNRDVIGQLLAEGVHWPAPVVINVQEIDSPFAGKTVVLTGSLSQMSRDDAKARLAALGAKVAGSVSKKTDLVIAGEAAGSKLAKAQELGITVIDEAEMIRLLGA</sequence>
<gene>
    <name evidence="1" type="primary">ligA</name>
    <name type="ordered locus">SeHA_C2686</name>
</gene>
<protein>
    <recommendedName>
        <fullName evidence="1">DNA ligase</fullName>
        <ecNumber evidence="1">6.5.1.2</ecNumber>
    </recommendedName>
    <alternativeName>
        <fullName evidence="1">Polydeoxyribonucleotide synthase [NAD(+)]</fullName>
    </alternativeName>
</protein>
<reference key="1">
    <citation type="journal article" date="2011" name="J. Bacteriol.">
        <title>Comparative genomics of 28 Salmonella enterica isolates: evidence for CRISPR-mediated adaptive sublineage evolution.</title>
        <authorList>
            <person name="Fricke W.F."/>
            <person name="Mammel M.K."/>
            <person name="McDermott P.F."/>
            <person name="Tartera C."/>
            <person name="White D.G."/>
            <person name="Leclerc J.E."/>
            <person name="Ravel J."/>
            <person name="Cebula T.A."/>
        </authorList>
    </citation>
    <scope>NUCLEOTIDE SEQUENCE [LARGE SCALE GENOMIC DNA]</scope>
    <source>
        <strain>SL476</strain>
    </source>
</reference>
<comment type="function">
    <text evidence="1">DNA ligase that catalyzes the formation of phosphodiester linkages between 5'-phosphoryl and 3'-hydroxyl groups in double-stranded DNA using NAD as a coenzyme and as the energy source for the reaction. It is essential for DNA replication and repair of damaged DNA.</text>
</comment>
<comment type="catalytic activity">
    <reaction evidence="1">
        <text>NAD(+) + (deoxyribonucleotide)n-3'-hydroxyl + 5'-phospho-(deoxyribonucleotide)m = (deoxyribonucleotide)n+m + AMP + beta-nicotinamide D-nucleotide.</text>
        <dbReference type="EC" id="6.5.1.2"/>
    </reaction>
</comment>
<comment type="cofactor">
    <cofactor evidence="1">
        <name>Mg(2+)</name>
        <dbReference type="ChEBI" id="CHEBI:18420"/>
    </cofactor>
    <cofactor evidence="1">
        <name>Mn(2+)</name>
        <dbReference type="ChEBI" id="CHEBI:29035"/>
    </cofactor>
</comment>
<comment type="similarity">
    <text evidence="1">Belongs to the NAD-dependent DNA ligase family. LigA subfamily.</text>
</comment>
<feature type="chain" id="PRO_0000380464" description="DNA ligase">
    <location>
        <begin position="1"/>
        <end position="671"/>
    </location>
</feature>
<feature type="domain" description="BRCT" evidence="1">
    <location>
        <begin position="593"/>
        <end position="671"/>
    </location>
</feature>
<feature type="active site" description="N6-AMP-lysine intermediate" evidence="1">
    <location>
        <position position="115"/>
    </location>
</feature>
<feature type="binding site" evidence="1">
    <location>
        <begin position="32"/>
        <end position="36"/>
    </location>
    <ligand>
        <name>NAD(+)</name>
        <dbReference type="ChEBI" id="CHEBI:57540"/>
    </ligand>
</feature>
<feature type="binding site" evidence="1">
    <location>
        <begin position="81"/>
        <end position="82"/>
    </location>
    <ligand>
        <name>NAD(+)</name>
        <dbReference type="ChEBI" id="CHEBI:57540"/>
    </ligand>
</feature>
<feature type="binding site" evidence="1">
    <location>
        <position position="113"/>
    </location>
    <ligand>
        <name>NAD(+)</name>
        <dbReference type="ChEBI" id="CHEBI:57540"/>
    </ligand>
</feature>
<feature type="binding site" evidence="1">
    <location>
        <position position="136"/>
    </location>
    <ligand>
        <name>NAD(+)</name>
        <dbReference type="ChEBI" id="CHEBI:57540"/>
    </ligand>
</feature>
<feature type="binding site" evidence="1">
    <location>
        <position position="173"/>
    </location>
    <ligand>
        <name>NAD(+)</name>
        <dbReference type="ChEBI" id="CHEBI:57540"/>
    </ligand>
</feature>
<feature type="binding site" evidence="1">
    <location>
        <position position="290"/>
    </location>
    <ligand>
        <name>NAD(+)</name>
        <dbReference type="ChEBI" id="CHEBI:57540"/>
    </ligand>
</feature>
<feature type="binding site" evidence="1">
    <location>
        <position position="314"/>
    </location>
    <ligand>
        <name>NAD(+)</name>
        <dbReference type="ChEBI" id="CHEBI:57540"/>
    </ligand>
</feature>
<feature type="binding site" evidence="1">
    <location>
        <position position="408"/>
    </location>
    <ligand>
        <name>Zn(2+)</name>
        <dbReference type="ChEBI" id="CHEBI:29105"/>
    </ligand>
</feature>
<feature type="binding site" evidence="1">
    <location>
        <position position="411"/>
    </location>
    <ligand>
        <name>Zn(2+)</name>
        <dbReference type="ChEBI" id="CHEBI:29105"/>
    </ligand>
</feature>
<feature type="binding site" evidence="1">
    <location>
        <position position="426"/>
    </location>
    <ligand>
        <name>Zn(2+)</name>
        <dbReference type="ChEBI" id="CHEBI:29105"/>
    </ligand>
</feature>
<feature type="binding site" evidence="1">
    <location>
        <position position="432"/>
    </location>
    <ligand>
        <name>Zn(2+)</name>
        <dbReference type="ChEBI" id="CHEBI:29105"/>
    </ligand>
</feature>
<accession>B4TCF6</accession>
<proteinExistence type="inferred from homology"/>
<name>DNLJ_SALHS</name>
<organism>
    <name type="scientific">Salmonella heidelberg (strain SL476)</name>
    <dbReference type="NCBI Taxonomy" id="454169"/>
    <lineage>
        <taxon>Bacteria</taxon>
        <taxon>Pseudomonadati</taxon>
        <taxon>Pseudomonadota</taxon>
        <taxon>Gammaproteobacteria</taxon>
        <taxon>Enterobacterales</taxon>
        <taxon>Enterobacteriaceae</taxon>
        <taxon>Salmonella</taxon>
    </lineage>
</organism>
<keyword id="KW-0227">DNA damage</keyword>
<keyword id="KW-0234">DNA repair</keyword>
<keyword id="KW-0235">DNA replication</keyword>
<keyword id="KW-0436">Ligase</keyword>
<keyword id="KW-0460">Magnesium</keyword>
<keyword id="KW-0464">Manganese</keyword>
<keyword id="KW-0479">Metal-binding</keyword>
<keyword id="KW-0520">NAD</keyword>
<keyword id="KW-0862">Zinc</keyword>
<evidence type="ECO:0000255" key="1">
    <source>
        <dbReference type="HAMAP-Rule" id="MF_01588"/>
    </source>
</evidence>
<dbReference type="EC" id="6.5.1.2" evidence="1"/>
<dbReference type="EMBL" id="CP001120">
    <property type="protein sequence ID" value="ACF68112.1"/>
    <property type="molecule type" value="Genomic_DNA"/>
</dbReference>
<dbReference type="RefSeq" id="WP_000433285.1">
    <property type="nucleotide sequence ID" value="NC_011083.1"/>
</dbReference>
<dbReference type="SMR" id="B4TCF6"/>
<dbReference type="KEGG" id="seh:SeHA_C2686"/>
<dbReference type="HOGENOM" id="CLU_007764_2_1_6"/>
<dbReference type="Proteomes" id="UP000001866">
    <property type="component" value="Chromosome"/>
</dbReference>
<dbReference type="GO" id="GO:0005829">
    <property type="term" value="C:cytosol"/>
    <property type="evidence" value="ECO:0007669"/>
    <property type="project" value="TreeGrafter"/>
</dbReference>
<dbReference type="GO" id="GO:0003677">
    <property type="term" value="F:DNA binding"/>
    <property type="evidence" value="ECO:0007669"/>
    <property type="project" value="InterPro"/>
</dbReference>
<dbReference type="GO" id="GO:0003911">
    <property type="term" value="F:DNA ligase (NAD+) activity"/>
    <property type="evidence" value="ECO:0007669"/>
    <property type="project" value="UniProtKB-UniRule"/>
</dbReference>
<dbReference type="GO" id="GO:0046872">
    <property type="term" value="F:metal ion binding"/>
    <property type="evidence" value="ECO:0007669"/>
    <property type="project" value="UniProtKB-KW"/>
</dbReference>
<dbReference type="GO" id="GO:0006281">
    <property type="term" value="P:DNA repair"/>
    <property type="evidence" value="ECO:0007669"/>
    <property type="project" value="UniProtKB-KW"/>
</dbReference>
<dbReference type="GO" id="GO:0006260">
    <property type="term" value="P:DNA replication"/>
    <property type="evidence" value="ECO:0007669"/>
    <property type="project" value="UniProtKB-KW"/>
</dbReference>
<dbReference type="CDD" id="cd17748">
    <property type="entry name" value="BRCT_DNA_ligase_like"/>
    <property type="match status" value="1"/>
</dbReference>
<dbReference type="CDD" id="cd00114">
    <property type="entry name" value="LIGANc"/>
    <property type="match status" value="1"/>
</dbReference>
<dbReference type="FunFam" id="1.10.150.20:FF:000006">
    <property type="entry name" value="DNA ligase"/>
    <property type="match status" value="1"/>
</dbReference>
<dbReference type="FunFam" id="1.10.150.20:FF:000007">
    <property type="entry name" value="DNA ligase"/>
    <property type="match status" value="1"/>
</dbReference>
<dbReference type="FunFam" id="1.10.287.610:FF:000002">
    <property type="entry name" value="DNA ligase"/>
    <property type="match status" value="1"/>
</dbReference>
<dbReference type="FunFam" id="2.40.50.140:FF:000012">
    <property type="entry name" value="DNA ligase"/>
    <property type="match status" value="1"/>
</dbReference>
<dbReference type="FunFam" id="3.30.470.30:FF:000001">
    <property type="entry name" value="DNA ligase"/>
    <property type="match status" value="1"/>
</dbReference>
<dbReference type="FunFam" id="3.40.50.10190:FF:000004">
    <property type="entry name" value="DNA ligase"/>
    <property type="match status" value="1"/>
</dbReference>
<dbReference type="FunFam" id="6.20.10.30:FF:000001">
    <property type="entry name" value="DNA ligase"/>
    <property type="match status" value="1"/>
</dbReference>
<dbReference type="Gene3D" id="6.20.10.30">
    <property type="match status" value="1"/>
</dbReference>
<dbReference type="Gene3D" id="1.10.150.20">
    <property type="entry name" value="5' to 3' exonuclease, C-terminal subdomain"/>
    <property type="match status" value="2"/>
</dbReference>
<dbReference type="Gene3D" id="3.40.50.10190">
    <property type="entry name" value="BRCT domain"/>
    <property type="match status" value="1"/>
</dbReference>
<dbReference type="Gene3D" id="3.30.470.30">
    <property type="entry name" value="DNA ligase/mRNA capping enzyme"/>
    <property type="match status" value="1"/>
</dbReference>
<dbReference type="Gene3D" id="1.10.287.610">
    <property type="entry name" value="Helix hairpin bin"/>
    <property type="match status" value="1"/>
</dbReference>
<dbReference type="Gene3D" id="2.40.50.140">
    <property type="entry name" value="Nucleic acid-binding proteins"/>
    <property type="match status" value="1"/>
</dbReference>
<dbReference type="HAMAP" id="MF_01588">
    <property type="entry name" value="DNA_ligase_A"/>
    <property type="match status" value="1"/>
</dbReference>
<dbReference type="InterPro" id="IPR001357">
    <property type="entry name" value="BRCT_dom"/>
</dbReference>
<dbReference type="InterPro" id="IPR036420">
    <property type="entry name" value="BRCT_dom_sf"/>
</dbReference>
<dbReference type="InterPro" id="IPR041663">
    <property type="entry name" value="DisA/LigA_HHH"/>
</dbReference>
<dbReference type="InterPro" id="IPR001679">
    <property type="entry name" value="DNA_ligase"/>
</dbReference>
<dbReference type="InterPro" id="IPR018239">
    <property type="entry name" value="DNA_ligase_AS"/>
</dbReference>
<dbReference type="InterPro" id="IPR033136">
    <property type="entry name" value="DNA_ligase_CS"/>
</dbReference>
<dbReference type="InterPro" id="IPR013839">
    <property type="entry name" value="DNAligase_adenylation"/>
</dbReference>
<dbReference type="InterPro" id="IPR013840">
    <property type="entry name" value="DNAligase_N"/>
</dbReference>
<dbReference type="InterPro" id="IPR003583">
    <property type="entry name" value="Hlx-hairpin-Hlx_DNA-bd_motif"/>
</dbReference>
<dbReference type="InterPro" id="IPR012340">
    <property type="entry name" value="NA-bd_OB-fold"/>
</dbReference>
<dbReference type="InterPro" id="IPR004150">
    <property type="entry name" value="NAD_DNA_ligase_OB"/>
</dbReference>
<dbReference type="InterPro" id="IPR010994">
    <property type="entry name" value="RuvA_2-like"/>
</dbReference>
<dbReference type="InterPro" id="IPR004149">
    <property type="entry name" value="Znf_DNAligase_C4"/>
</dbReference>
<dbReference type="NCBIfam" id="TIGR00575">
    <property type="entry name" value="dnlj"/>
    <property type="match status" value="1"/>
</dbReference>
<dbReference type="NCBIfam" id="NF005932">
    <property type="entry name" value="PRK07956.1"/>
    <property type="match status" value="1"/>
</dbReference>
<dbReference type="PANTHER" id="PTHR23389">
    <property type="entry name" value="CHROMOSOME TRANSMISSION FIDELITY FACTOR 18"/>
    <property type="match status" value="1"/>
</dbReference>
<dbReference type="PANTHER" id="PTHR23389:SF9">
    <property type="entry name" value="DNA LIGASE"/>
    <property type="match status" value="1"/>
</dbReference>
<dbReference type="Pfam" id="PF00533">
    <property type="entry name" value="BRCT"/>
    <property type="match status" value="1"/>
</dbReference>
<dbReference type="Pfam" id="PF01653">
    <property type="entry name" value="DNA_ligase_aden"/>
    <property type="match status" value="1"/>
</dbReference>
<dbReference type="Pfam" id="PF03120">
    <property type="entry name" value="DNA_ligase_OB"/>
    <property type="match status" value="1"/>
</dbReference>
<dbReference type="Pfam" id="PF03119">
    <property type="entry name" value="DNA_ligase_ZBD"/>
    <property type="match status" value="1"/>
</dbReference>
<dbReference type="Pfam" id="PF12826">
    <property type="entry name" value="HHH_2"/>
    <property type="match status" value="1"/>
</dbReference>
<dbReference type="Pfam" id="PF14520">
    <property type="entry name" value="HHH_5"/>
    <property type="match status" value="1"/>
</dbReference>
<dbReference type="Pfam" id="PF22745">
    <property type="entry name" value="Nlig-Ia"/>
    <property type="match status" value="1"/>
</dbReference>
<dbReference type="PIRSF" id="PIRSF001604">
    <property type="entry name" value="LigA"/>
    <property type="match status" value="1"/>
</dbReference>
<dbReference type="SMART" id="SM00292">
    <property type="entry name" value="BRCT"/>
    <property type="match status" value="1"/>
</dbReference>
<dbReference type="SMART" id="SM00278">
    <property type="entry name" value="HhH1"/>
    <property type="match status" value="4"/>
</dbReference>
<dbReference type="SMART" id="SM00532">
    <property type="entry name" value="LIGANc"/>
    <property type="match status" value="1"/>
</dbReference>
<dbReference type="SUPFAM" id="SSF52113">
    <property type="entry name" value="BRCT domain"/>
    <property type="match status" value="1"/>
</dbReference>
<dbReference type="SUPFAM" id="SSF56091">
    <property type="entry name" value="DNA ligase/mRNA capping enzyme, catalytic domain"/>
    <property type="match status" value="1"/>
</dbReference>
<dbReference type="SUPFAM" id="SSF50249">
    <property type="entry name" value="Nucleic acid-binding proteins"/>
    <property type="match status" value="1"/>
</dbReference>
<dbReference type="SUPFAM" id="SSF47781">
    <property type="entry name" value="RuvA domain 2-like"/>
    <property type="match status" value="1"/>
</dbReference>
<dbReference type="PROSITE" id="PS50172">
    <property type="entry name" value="BRCT"/>
    <property type="match status" value="1"/>
</dbReference>
<dbReference type="PROSITE" id="PS01055">
    <property type="entry name" value="DNA_LIGASE_N1"/>
    <property type="match status" value="1"/>
</dbReference>
<dbReference type="PROSITE" id="PS01056">
    <property type="entry name" value="DNA_LIGASE_N2"/>
    <property type="match status" value="1"/>
</dbReference>